<reference key="1">
    <citation type="journal article" date="1999" name="Genetics">
        <title>Divergence of the hyperthermophilic archaea Pyrococcus furiosus and P. horikoshii inferred from complete genomic sequences.</title>
        <authorList>
            <person name="Maeder D.L."/>
            <person name="Weiss R.B."/>
            <person name="Dunn D.M."/>
            <person name="Cherry J.L."/>
            <person name="Gonzalez J.M."/>
            <person name="DiRuggiero J."/>
            <person name="Robb F.T."/>
        </authorList>
    </citation>
    <scope>NUCLEOTIDE SEQUENCE [LARGE SCALE GENOMIC DNA]</scope>
    <source>
        <strain>ATCC 43587 / DSM 3638 / JCM 8422 / Vc1</strain>
    </source>
</reference>
<protein>
    <recommendedName>
        <fullName evidence="1">Shikimate dehydrogenase (NADP(+))</fullName>
        <shortName evidence="1">SDH</shortName>
        <ecNumber evidence="1">1.1.1.25</ecNumber>
    </recommendedName>
</protein>
<comment type="function">
    <text evidence="1">Involved in the biosynthesis of the chorismate, which leads to the biosynthesis of aromatic amino acids. Catalyzes the reversible NADPH linked reduction of 3-dehydroshikimate (DHSA) to yield shikimate (SA).</text>
</comment>
<comment type="catalytic activity">
    <reaction evidence="1">
        <text>shikimate + NADP(+) = 3-dehydroshikimate + NADPH + H(+)</text>
        <dbReference type="Rhea" id="RHEA:17737"/>
        <dbReference type="ChEBI" id="CHEBI:15378"/>
        <dbReference type="ChEBI" id="CHEBI:16630"/>
        <dbReference type="ChEBI" id="CHEBI:36208"/>
        <dbReference type="ChEBI" id="CHEBI:57783"/>
        <dbReference type="ChEBI" id="CHEBI:58349"/>
        <dbReference type="EC" id="1.1.1.25"/>
    </reaction>
</comment>
<comment type="pathway">
    <text evidence="1">Metabolic intermediate biosynthesis; chorismate biosynthesis; chorismate from D-erythrose 4-phosphate and phosphoenolpyruvate: step 4/7.</text>
</comment>
<comment type="subunit">
    <text evidence="1">Homodimer.</text>
</comment>
<comment type="similarity">
    <text evidence="1">Belongs to the shikimate dehydrogenase family.</text>
</comment>
<gene>
    <name evidence="1" type="primary">aroE</name>
    <name type="ordered locus">PF1693</name>
</gene>
<evidence type="ECO:0000255" key="1">
    <source>
        <dbReference type="HAMAP-Rule" id="MF_00222"/>
    </source>
</evidence>
<keyword id="KW-0028">Amino-acid biosynthesis</keyword>
<keyword id="KW-0057">Aromatic amino acid biosynthesis</keyword>
<keyword id="KW-0521">NADP</keyword>
<keyword id="KW-0560">Oxidoreductase</keyword>
<keyword id="KW-1185">Reference proteome</keyword>
<organism>
    <name type="scientific">Pyrococcus furiosus (strain ATCC 43587 / DSM 3638 / JCM 8422 / Vc1)</name>
    <dbReference type="NCBI Taxonomy" id="186497"/>
    <lineage>
        <taxon>Archaea</taxon>
        <taxon>Methanobacteriati</taxon>
        <taxon>Methanobacteriota</taxon>
        <taxon>Thermococci</taxon>
        <taxon>Thermococcales</taxon>
        <taxon>Thermococcaceae</taxon>
        <taxon>Pyrococcus</taxon>
    </lineage>
</organism>
<accession>Q8U0A6</accession>
<name>AROE_PYRFU</name>
<feature type="chain" id="PRO_0000136066" description="Shikimate dehydrogenase (NADP(+))">
    <location>
        <begin position="1"/>
        <end position="271"/>
    </location>
</feature>
<feature type="active site" description="Proton acceptor" evidence="1">
    <location>
        <position position="69"/>
    </location>
</feature>
<feature type="binding site" evidence="1">
    <location>
        <begin position="19"/>
        <end position="21"/>
    </location>
    <ligand>
        <name>shikimate</name>
        <dbReference type="ChEBI" id="CHEBI:36208"/>
    </ligand>
</feature>
<feature type="binding site" evidence="1">
    <location>
        <position position="65"/>
    </location>
    <ligand>
        <name>shikimate</name>
        <dbReference type="ChEBI" id="CHEBI:36208"/>
    </ligand>
</feature>
<feature type="binding site" evidence="1">
    <location>
        <position position="81"/>
    </location>
    <ligand>
        <name>NADP(+)</name>
        <dbReference type="ChEBI" id="CHEBI:58349"/>
    </ligand>
</feature>
<feature type="binding site" evidence="1">
    <location>
        <position position="90"/>
    </location>
    <ligand>
        <name>shikimate</name>
        <dbReference type="ChEBI" id="CHEBI:36208"/>
    </ligand>
</feature>
<feature type="binding site" evidence="1">
    <location>
        <position position="105"/>
    </location>
    <ligand>
        <name>shikimate</name>
        <dbReference type="ChEBI" id="CHEBI:36208"/>
    </ligand>
</feature>
<feature type="binding site" evidence="1">
    <location>
        <begin position="128"/>
        <end position="132"/>
    </location>
    <ligand>
        <name>NADP(+)</name>
        <dbReference type="ChEBI" id="CHEBI:58349"/>
    </ligand>
</feature>
<feature type="binding site" evidence="1">
    <location>
        <begin position="150"/>
        <end position="155"/>
    </location>
    <ligand>
        <name>NADP(+)</name>
        <dbReference type="ChEBI" id="CHEBI:58349"/>
    </ligand>
</feature>
<feature type="binding site" evidence="1">
    <location>
        <position position="211"/>
    </location>
    <ligand>
        <name>NADP(+)</name>
        <dbReference type="ChEBI" id="CHEBI:58349"/>
    </ligand>
</feature>
<feature type="binding site" evidence="1">
    <location>
        <position position="213"/>
    </location>
    <ligand>
        <name>shikimate</name>
        <dbReference type="ChEBI" id="CHEBI:36208"/>
    </ligand>
</feature>
<feature type="binding site" evidence="1">
    <location>
        <position position="234"/>
    </location>
    <ligand>
        <name>NADP(+)</name>
        <dbReference type="ChEBI" id="CHEBI:58349"/>
    </ligand>
</feature>
<proteinExistence type="inferred from homology"/>
<dbReference type="EC" id="1.1.1.25" evidence="1"/>
<dbReference type="EMBL" id="AE009950">
    <property type="protein sequence ID" value="AAL81817.1"/>
    <property type="molecule type" value="Genomic_DNA"/>
</dbReference>
<dbReference type="RefSeq" id="WP_011012839.1">
    <property type="nucleotide sequence ID" value="NZ_CP023154.1"/>
</dbReference>
<dbReference type="SMR" id="Q8U0A6"/>
<dbReference type="STRING" id="186497.PF1693"/>
<dbReference type="PaxDb" id="186497-PF1693"/>
<dbReference type="KEGG" id="pfu:PF1693"/>
<dbReference type="PATRIC" id="fig|186497.12.peg.1761"/>
<dbReference type="eggNOG" id="arCOG01033">
    <property type="taxonomic scope" value="Archaea"/>
</dbReference>
<dbReference type="HOGENOM" id="CLU_044063_4_1_2"/>
<dbReference type="OrthoDB" id="8744at2157"/>
<dbReference type="PhylomeDB" id="Q8U0A6"/>
<dbReference type="UniPathway" id="UPA00053">
    <property type="reaction ID" value="UER00087"/>
</dbReference>
<dbReference type="Proteomes" id="UP000001013">
    <property type="component" value="Chromosome"/>
</dbReference>
<dbReference type="GO" id="GO:0050661">
    <property type="term" value="F:NADP binding"/>
    <property type="evidence" value="ECO:0007669"/>
    <property type="project" value="InterPro"/>
</dbReference>
<dbReference type="GO" id="GO:0004764">
    <property type="term" value="F:shikimate 3-dehydrogenase (NADP+) activity"/>
    <property type="evidence" value="ECO:0007669"/>
    <property type="project" value="UniProtKB-UniRule"/>
</dbReference>
<dbReference type="GO" id="GO:0008652">
    <property type="term" value="P:amino acid biosynthetic process"/>
    <property type="evidence" value="ECO:0007669"/>
    <property type="project" value="UniProtKB-KW"/>
</dbReference>
<dbReference type="GO" id="GO:0009073">
    <property type="term" value="P:aromatic amino acid family biosynthetic process"/>
    <property type="evidence" value="ECO:0007669"/>
    <property type="project" value="UniProtKB-KW"/>
</dbReference>
<dbReference type="GO" id="GO:0009423">
    <property type="term" value="P:chorismate biosynthetic process"/>
    <property type="evidence" value="ECO:0007669"/>
    <property type="project" value="UniProtKB-UniRule"/>
</dbReference>
<dbReference type="GO" id="GO:0019632">
    <property type="term" value="P:shikimate metabolic process"/>
    <property type="evidence" value="ECO:0007669"/>
    <property type="project" value="InterPro"/>
</dbReference>
<dbReference type="CDD" id="cd01065">
    <property type="entry name" value="NAD_bind_Shikimate_DH"/>
    <property type="match status" value="1"/>
</dbReference>
<dbReference type="Gene3D" id="3.40.50.10860">
    <property type="entry name" value="Leucine Dehydrogenase, chain A, domain 1"/>
    <property type="match status" value="1"/>
</dbReference>
<dbReference type="Gene3D" id="3.40.50.720">
    <property type="entry name" value="NAD(P)-binding Rossmann-like Domain"/>
    <property type="match status" value="1"/>
</dbReference>
<dbReference type="HAMAP" id="MF_00222">
    <property type="entry name" value="Shikimate_DH_AroE"/>
    <property type="match status" value="1"/>
</dbReference>
<dbReference type="InterPro" id="IPR046346">
    <property type="entry name" value="Aminoacid_DH-like_N_sf"/>
</dbReference>
<dbReference type="InterPro" id="IPR036291">
    <property type="entry name" value="NAD(P)-bd_dom_sf"/>
</dbReference>
<dbReference type="InterPro" id="IPR041121">
    <property type="entry name" value="SDH_C"/>
</dbReference>
<dbReference type="InterPro" id="IPR011342">
    <property type="entry name" value="Shikimate_DH"/>
</dbReference>
<dbReference type="InterPro" id="IPR013708">
    <property type="entry name" value="Shikimate_DH-bd_N"/>
</dbReference>
<dbReference type="InterPro" id="IPR022893">
    <property type="entry name" value="Shikimate_DH_fam"/>
</dbReference>
<dbReference type="InterPro" id="IPR006151">
    <property type="entry name" value="Shikm_DH/Glu-tRNA_Rdtase"/>
</dbReference>
<dbReference type="NCBIfam" id="TIGR00507">
    <property type="entry name" value="aroE"/>
    <property type="match status" value="1"/>
</dbReference>
<dbReference type="NCBIfam" id="NF001319">
    <property type="entry name" value="PRK00258.3-3"/>
    <property type="match status" value="1"/>
</dbReference>
<dbReference type="PANTHER" id="PTHR21089:SF1">
    <property type="entry name" value="BIFUNCTIONAL 3-DEHYDROQUINATE DEHYDRATASE_SHIKIMATE DEHYDROGENASE, CHLOROPLASTIC"/>
    <property type="match status" value="1"/>
</dbReference>
<dbReference type="PANTHER" id="PTHR21089">
    <property type="entry name" value="SHIKIMATE DEHYDROGENASE"/>
    <property type="match status" value="1"/>
</dbReference>
<dbReference type="Pfam" id="PF18317">
    <property type="entry name" value="SDH_C"/>
    <property type="match status" value="1"/>
</dbReference>
<dbReference type="Pfam" id="PF01488">
    <property type="entry name" value="Shikimate_DH"/>
    <property type="match status" value="1"/>
</dbReference>
<dbReference type="Pfam" id="PF08501">
    <property type="entry name" value="Shikimate_dh_N"/>
    <property type="match status" value="1"/>
</dbReference>
<dbReference type="SUPFAM" id="SSF53223">
    <property type="entry name" value="Aminoacid dehydrogenase-like, N-terminal domain"/>
    <property type="match status" value="1"/>
</dbReference>
<dbReference type="SUPFAM" id="SSF51735">
    <property type="entry name" value="NAD(P)-binding Rossmann-fold domains"/>
    <property type="match status" value="1"/>
</dbReference>
<sequence>MINGETKIYGIIGNPVKHSLSPIMHNALFKKFGINAIYVPFEVKKDLKNAINGVKALDIQGVNVTMPYKEEVIKFLDELSEDSQNIGSVNTVVNLEGKLVGYTTDGIGARRALERFTQVDGANILILGAGGAGKAIAYELSKVANVVVLNRTIEKAKRLEKFGIVGDSLEALPYYVEWADILINATSVGMNEEKSLVPKNLLRPGLVVMDIVYKPLNTLLLRYAQEKGCIAIDGLWMLVYQGAESFRLWTGEEGDVELMRRVALAWLRERK</sequence>